<protein>
    <recommendedName>
        <fullName evidence="1">Holo-[acyl-carrier-protein] synthase</fullName>
        <shortName evidence="1">Holo-ACP synthase</shortName>
        <ecNumber evidence="1">2.7.8.7</ecNumber>
    </recommendedName>
    <alternativeName>
        <fullName evidence="1">4'-phosphopantetheinyl transferase AcpS</fullName>
    </alternativeName>
</protein>
<gene>
    <name evidence="1" type="primary">acpS</name>
    <name type="ordered locus">SPy_1804</name>
    <name type="ordered locus">M5005_Spy1533</name>
</gene>
<organism>
    <name type="scientific">Streptococcus pyogenes serotype M1</name>
    <dbReference type="NCBI Taxonomy" id="301447"/>
    <lineage>
        <taxon>Bacteria</taxon>
        <taxon>Bacillati</taxon>
        <taxon>Bacillota</taxon>
        <taxon>Bacilli</taxon>
        <taxon>Lactobacillales</taxon>
        <taxon>Streptococcaceae</taxon>
        <taxon>Streptococcus</taxon>
    </lineage>
</organism>
<keyword id="KW-0963">Cytoplasm</keyword>
<keyword id="KW-0275">Fatty acid biosynthesis</keyword>
<keyword id="KW-0276">Fatty acid metabolism</keyword>
<keyword id="KW-0444">Lipid biosynthesis</keyword>
<keyword id="KW-0443">Lipid metabolism</keyword>
<keyword id="KW-0460">Magnesium</keyword>
<keyword id="KW-0479">Metal-binding</keyword>
<keyword id="KW-1185">Reference proteome</keyword>
<keyword id="KW-0808">Transferase</keyword>
<reference key="1">
    <citation type="journal article" date="2001" name="Proc. Natl. Acad. Sci. U.S.A.">
        <title>Complete genome sequence of an M1 strain of Streptococcus pyogenes.</title>
        <authorList>
            <person name="Ferretti J.J."/>
            <person name="McShan W.M."/>
            <person name="Ajdic D.J."/>
            <person name="Savic D.J."/>
            <person name="Savic G."/>
            <person name="Lyon K."/>
            <person name="Primeaux C."/>
            <person name="Sezate S."/>
            <person name="Suvorov A.N."/>
            <person name="Kenton S."/>
            <person name="Lai H.S."/>
            <person name="Lin S.P."/>
            <person name="Qian Y."/>
            <person name="Jia H.G."/>
            <person name="Najar F.Z."/>
            <person name="Ren Q."/>
            <person name="Zhu H."/>
            <person name="Song L."/>
            <person name="White J."/>
            <person name="Yuan X."/>
            <person name="Clifton S.W."/>
            <person name="Roe B.A."/>
            <person name="McLaughlin R.E."/>
        </authorList>
    </citation>
    <scope>NUCLEOTIDE SEQUENCE [LARGE SCALE GENOMIC DNA]</scope>
    <source>
        <strain>ATCC 700294 / SF370 / Serotype M1</strain>
    </source>
</reference>
<reference key="2">
    <citation type="journal article" date="2005" name="J. Infect. Dis.">
        <title>Evolutionary origin and emergence of a highly successful clone of serotype M1 group A Streptococcus involved multiple horizontal gene transfer events.</title>
        <authorList>
            <person name="Sumby P."/>
            <person name="Porcella S.F."/>
            <person name="Madrigal A.G."/>
            <person name="Barbian K.D."/>
            <person name="Virtaneva K."/>
            <person name="Ricklefs S.M."/>
            <person name="Sturdevant D.E."/>
            <person name="Graham M.R."/>
            <person name="Vuopio-Varkila J."/>
            <person name="Hoe N.P."/>
            <person name="Musser J.M."/>
        </authorList>
    </citation>
    <scope>NUCLEOTIDE SEQUENCE [LARGE SCALE GENOMIC DNA]</scope>
    <source>
        <strain>ATCC BAA-947 / MGAS5005 / Serotype M1</strain>
    </source>
</reference>
<accession>Q99Y97</accession>
<accession>Q48WX4</accession>
<proteinExistence type="inferred from homology"/>
<name>ACPS_STRP1</name>
<evidence type="ECO:0000255" key="1">
    <source>
        <dbReference type="HAMAP-Rule" id="MF_00101"/>
    </source>
</evidence>
<comment type="function">
    <text evidence="1">Transfers the 4'-phosphopantetheine moiety from coenzyme A to a Ser of acyl-carrier-protein.</text>
</comment>
<comment type="catalytic activity">
    <reaction evidence="1">
        <text>apo-[ACP] + CoA = holo-[ACP] + adenosine 3',5'-bisphosphate + H(+)</text>
        <dbReference type="Rhea" id="RHEA:12068"/>
        <dbReference type="Rhea" id="RHEA-COMP:9685"/>
        <dbReference type="Rhea" id="RHEA-COMP:9690"/>
        <dbReference type="ChEBI" id="CHEBI:15378"/>
        <dbReference type="ChEBI" id="CHEBI:29999"/>
        <dbReference type="ChEBI" id="CHEBI:57287"/>
        <dbReference type="ChEBI" id="CHEBI:58343"/>
        <dbReference type="ChEBI" id="CHEBI:64479"/>
        <dbReference type="EC" id="2.7.8.7"/>
    </reaction>
</comment>
<comment type="cofactor">
    <cofactor evidence="1">
        <name>Mg(2+)</name>
        <dbReference type="ChEBI" id="CHEBI:18420"/>
    </cofactor>
</comment>
<comment type="subcellular location">
    <subcellularLocation>
        <location evidence="1">Cytoplasm</location>
    </subcellularLocation>
</comment>
<comment type="similarity">
    <text evidence="1">Belongs to the P-Pant transferase superfamily. AcpS family.</text>
</comment>
<dbReference type="EC" id="2.7.8.7" evidence="1"/>
<dbReference type="EMBL" id="AE004092">
    <property type="protein sequence ID" value="AAK34533.1"/>
    <property type="molecule type" value="Genomic_DNA"/>
</dbReference>
<dbReference type="EMBL" id="CP000017">
    <property type="protein sequence ID" value="AAZ52151.1"/>
    <property type="molecule type" value="Genomic_DNA"/>
</dbReference>
<dbReference type="RefSeq" id="NP_269812.1">
    <property type="nucleotide sequence ID" value="NC_002737.2"/>
</dbReference>
<dbReference type="SMR" id="Q99Y97"/>
<dbReference type="PaxDb" id="1314-HKU360_01584"/>
<dbReference type="KEGG" id="spy:SPy_1804"/>
<dbReference type="KEGG" id="spz:M5005_Spy1533"/>
<dbReference type="PATRIC" id="fig|160490.10.peg.1569"/>
<dbReference type="HOGENOM" id="CLU_089696_1_2_9"/>
<dbReference type="OMA" id="DERHYAV"/>
<dbReference type="Proteomes" id="UP000000750">
    <property type="component" value="Chromosome"/>
</dbReference>
<dbReference type="GO" id="GO:0005737">
    <property type="term" value="C:cytoplasm"/>
    <property type="evidence" value="ECO:0007669"/>
    <property type="project" value="UniProtKB-SubCell"/>
</dbReference>
<dbReference type="GO" id="GO:0008897">
    <property type="term" value="F:holo-[acyl-carrier-protein] synthase activity"/>
    <property type="evidence" value="ECO:0007669"/>
    <property type="project" value="UniProtKB-UniRule"/>
</dbReference>
<dbReference type="GO" id="GO:0000287">
    <property type="term" value="F:magnesium ion binding"/>
    <property type="evidence" value="ECO:0007669"/>
    <property type="project" value="UniProtKB-UniRule"/>
</dbReference>
<dbReference type="GO" id="GO:0006633">
    <property type="term" value="P:fatty acid biosynthetic process"/>
    <property type="evidence" value="ECO:0007669"/>
    <property type="project" value="UniProtKB-UniRule"/>
</dbReference>
<dbReference type="Gene3D" id="3.90.470.20">
    <property type="entry name" value="4'-phosphopantetheinyl transferase domain"/>
    <property type="match status" value="1"/>
</dbReference>
<dbReference type="HAMAP" id="MF_00101">
    <property type="entry name" value="AcpS"/>
    <property type="match status" value="1"/>
</dbReference>
<dbReference type="InterPro" id="IPR008278">
    <property type="entry name" value="4-PPantetheinyl_Trfase_dom"/>
</dbReference>
<dbReference type="InterPro" id="IPR037143">
    <property type="entry name" value="4-PPantetheinyl_Trfase_dom_sf"/>
</dbReference>
<dbReference type="InterPro" id="IPR002582">
    <property type="entry name" value="ACPS"/>
</dbReference>
<dbReference type="InterPro" id="IPR004568">
    <property type="entry name" value="Ppantetheine-prot_Trfase_dom"/>
</dbReference>
<dbReference type="NCBIfam" id="TIGR00516">
    <property type="entry name" value="acpS"/>
    <property type="match status" value="1"/>
</dbReference>
<dbReference type="NCBIfam" id="TIGR00556">
    <property type="entry name" value="pantethn_trn"/>
    <property type="match status" value="1"/>
</dbReference>
<dbReference type="Pfam" id="PF01648">
    <property type="entry name" value="ACPS"/>
    <property type="match status" value="1"/>
</dbReference>
<dbReference type="SUPFAM" id="SSF56214">
    <property type="entry name" value="4'-phosphopantetheinyl transferase"/>
    <property type="match status" value="1"/>
</dbReference>
<sequence>MIVGHGIDLQEISAIEKVYQRNPRFAQKILTEQELAIFESFPYKRRLNYLAGRWSGKEAFAKAIGTGIGRLTFQDIEILNDVRGCPILTKSPFKGNSFISISHSGNYVQASVILEDKK</sequence>
<feature type="chain" id="PRO_0000175715" description="Holo-[acyl-carrier-protein] synthase">
    <location>
        <begin position="1"/>
        <end position="118"/>
    </location>
</feature>
<feature type="binding site" evidence="1">
    <location>
        <position position="8"/>
    </location>
    <ligand>
        <name>Mg(2+)</name>
        <dbReference type="ChEBI" id="CHEBI:18420"/>
    </ligand>
</feature>
<feature type="binding site" evidence="1">
    <location>
        <position position="58"/>
    </location>
    <ligand>
        <name>Mg(2+)</name>
        <dbReference type="ChEBI" id="CHEBI:18420"/>
    </ligand>
</feature>